<organism>
    <name type="scientific">Schizosaccharomyces pombe (strain 972 / ATCC 24843)</name>
    <name type="common">Fission yeast</name>
    <dbReference type="NCBI Taxonomy" id="284812"/>
    <lineage>
        <taxon>Eukaryota</taxon>
        <taxon>Fungi</taxon>
        <taxon>Dikarya</taxon>
        <taxon>Ascomycota</taxon>
        <taxon>Taphrinomycotina</taxon>
        <taxon>Schizosaccharomycetes</taxon>
        <taxon>Schizosaccharomycetales</taxon>
        <taxon>Schizosaccharomycetaceae</taxon>
        <taxon>Schizosaccharomyces</taxon>
    </lineage>
</organism>
<gene>
    <name type="primary">rft1</name>
    <name type="ORF">SPBC887.19</name>
</gene>
<dbReference type="EMBL" id="CU329671">
    <property type="protein sequence ID" value="CAA21904.1"/>
    <property type="molecule type" value="Genomic_DNA"/>
</dbReference>
<dbReference type="PIR" id="T40744">
    <property type="entry name" value="T40744"/>
</dbReference>
<dbReference type="RefSeq" id="NP_596493.1">
    <property type="nucleotide sequence ID" value="NM_001022413.2"/>
</dbReference>
<dbReference type="SMR" id="O94302"/>
<dbReference type="FunCoup" id="O94302">
    <property type="interactions" value="374"/>
</dbReference>
<dbReference type="STRING" id="284812.O94302"/>
<dbReference type="iPTMnet" id="O94302"/>
<dbReference type="SwissPalm" id="O94302"/>
<dbReference type="PaxDb" id="4896-SPBC887.19.1"/>
<dbReference type="EnsemblFungi" id="SPBC887.19.1">
    <property type="protein sequence ID" value="SPBC887.19.1:pep"/>
    <property type="gene ID" value="SPBC887.19"/>
</dbReference>
<dbReference type="GeneID" id="2541221"/>
<dbReference type="KEGG" id="spo:2541221"/>
<dbReference type="PomBase" id="SPBC887.19">
    <property type="gene designation" value="rft1"/>
</dbReference>
<dbReference type="VEuPathDB" id="FungiDB:SPBC887.19"/>
<dbReference type="eggNOG" id="KOG2864">
    <property type="taxonomic scope" value="Eukaryota"/>
</dbReference>
<dbReference type="HOGENOM" id="CLU_023360_3_1_1"/>
<dbReference type="InParanoid" id="O94302"/>
<dbReference type="OMA" id="WPGKLFG"/>
<dbReference type="PhylomeDB" id="O94302"/>
<dbReference type="UniPathway" id="UPA00378"/>
<dbReference type="PRO" id="PR:O94302"/>
<dbReference type="Proteomes" id="UP000002485">
    <property type="component" value="Chromosome II"/>
</dbReference>
<dbReference type="GO" id="GO:0005783">
    <property type="term" value="C:endoplasmic reticulum"/>
    <property type="evidence" value="ECO:0007005"/>
    <property type="project" value="PomBase"/>
</dbReference>
<dbReference type="GO" id="GO:0005789">
    <property type="term" value="C:endoplasmic reticulum membrane"/>
    <property type="evidence" value="ECO:0000318"/>
    <property type="project" value="GO_Central"/>
</dbReference>
<dbReference type="GO" id="GO:0034202">
    <property type="term" value="F:glycolipid floppase activity"/>
    <property type="evidence" value="ECO:0000266"/>
    <property type="project" value="PomBase"/>
</dbReference>
<dbReference type="GO" id="GO:0006488">
    <property type="term" value="P:dolichol-linked oligosaccharide biosynthetic process"/>
    <property type="evidence" value="ECO:0000250"/>
    <property type="project" value="UniProtKB"/>
</dbReference>
<dbReference type="GO" id="GO:0034203">
    <property type="term" value="P:glycolipid translocation"/>
    <property type="evidence" value="ECO:0000250"/>
    <property type="project" value="UniProtKB"/>
</dbReference>
<dbReference type="GO" id="GO:0006487">
    <property type="term" value="P:protein N-linked glycosylation"/>
    <property type="evidence" value="ECO:0000250"/>
    <property type="project" value="UniProtKB"/>
</dbReference>
<dbReference type="CDD" id="cd13130">
    <property type="entry name" value="MATE_rft1"/>
    <property type="match status" value="1"/>
</dbReference>
<dbReference type="InterPro" id="IPR007594">
    <property type="entry name" value="RFT1"/>
</dbReference>
<dbReference type="PANTHER" id="PTHR13117">
    <property type="entry name" value="ENDOPLASMIC RETICULUM MULTISPAN TRANSMEMBRANE PROTEIN-RELATED"/>
    <property type="match status" value="1"/>
</dbReference>
<dbReference type="PANTHER" id="PTHR13117:SF5">
    <property type="entry name" value="PROTEIN RFT1 HOMOLOG"/>
    <property type="match status" value="1"/>
</dbReference>
<dbReference type="Pfam" id="PF04506">
    <property type="entry name" value="Rft-1"/>
    <property type="match status" value="1"/>
</dbReference>
<protein>
    <recommendedName>
        <fullName evidence="1">Man(5)GlcNAc(2)-PP-dolichol translocation protein RFT1</fullName>
    </recommendedName>
</protein>
<sequence>MDKSDSLLQSSSKGLRSSIFFQGSSRILTFFLNQLTIRLTSPSAYAFSSIHFEILQSTILFLSRESVRLAMQRIPSENAIITSTSTESNKSKKLSDQLQLIKNTSLISVYIGIVISLLVSLFYFYSLPNFPYSKTCIFIYTVSSFIELLSEPYYEVLQWRQKFSKTASAEGLGTIICSLLSFAISVLGRNKAPSSLPFALGNLSEKVTIFFTLRYFAKQPFSIFLHKVGENERYIFWDSSTLRIICSHTYQVLLKHLITKGDKIMVAWYASPSAQGPYALASNYGSLLARIVFRPVEDHSHIVFAQLTHYKNKKDEKKALNLLAWILKLYSYMSLFILFGSNYSDIVLLFGAGSKWASPDSSSILSWYAMYIPFMAANGVLEAFYVSAANSSQLYDQGKCYLASAVFYFITGKFLLSWFNLGSHGLILANILNLSLRICFALRFILHNYKDFSLPRSLPRPFLLALSILLSIISSFLVKHWRESKVPFLVYFLSAPSLAILYSCFIILVDKDVRGYAKILLSKYYIK</sequence>
<accession>O94302</accession>
<feature type="chain" id="PRO_0000212418" description="Man(5)GlcNAc(2)-PP-dolichol translocation protein RFT1">
    <location>
        <begin position="1"/>
        <end position="527"/>
    </location>
</feature>
<feature type="transmembrane region" description="Helical" evidence="2">
    <location>
        <begin position="42"/>
        <end position="62"/>
    </location>
</feature>
<feature type="transmembrane region" description="Helical" evidence="2">
    <location>
        <begin position="106"/>
        <end position="126"/>
    </location>
</feature>
<feature type="transmembrane region" description="Helical" evidence="2">
    <location>
        <begin position="137"/>
        <end position="157"/>
    </location>
</feature>
<feature type="transmembrane region" description="Helical" evidence="2">
    <location>
        <begin position="167"/>
        <end position="187"/>
    </location>
</feature>
<feature type="transmembrane region" description="Helical" evidence="2">
    <location>
        <begin position="319"/>
        <end position="339"/>
    </location>
</feature>
<feature type="transmembrane region" description="Helical" evidence="2">
    <location>
        <begin position="364"/>
        <end position="384"/>
    </location>
</feature>
<feature type="transmembrane region" description="Helical" evidence="2">
    <location>
        <begin position="402"/>
        <end position="422"/>
    </location>
</feature>
<feature type="transmembrane region" description="Helical" evidence="2">
    <location>
        <begin position="426"/>
        <end position="446"/>
    </location>
</feature>
<feature type="transmembrane region" description="Helical" evidence="2">
    <location>
        <begin position="461"/>
        <end position="481"/>
    </location>
</feature>
<feature type="transmembrane region" description="Helical" evidence="2">
    <location>
        <begin position="488"/>
        <end position="508"/>
    </location>
</feature>
<evidence type="ECO:0000250" key="1">
    <source>
        <dbReference type="UniProtKB" id="P38206"/>
    </source>
</evidence>
<evidence type="ECO:0000255" key="2"/>
<evidence type="ECO:0000305" key="3"/>
<proteinExistence type="inferred from homology"/>
<comment type="function">
    <text evidence="1">Intramembrane glycolipid transporter that operates in the biosynthetic pathway of dolichol-linked oligosaccharides, the glycan precursors employed in protein asparagine (N)-glycosylation. The sequential addition of sugars to dolichol pyrophosphate produces dolichol-linked oligosaccharides containing fourteen sugars, including two GlcNAcs, nine mannoses and three glucoses. Once assembled, the oligosaccharide is transferred from the lipid to nascent proteins by oligosaccharyltransferases. The assembly of dolichol-linked oligosaccharides begins on the cytosolic side of the endoplasmic reticulum membrane and finishes in its lumen. RFT1 could mediate the translocation of the cytosolically oriented intermediate DolPP-GlcNAc2Man5, produced by ALG11, into the ER lumen where dolichol-linked oligosaccharides assembly continues. However, the intramembrane lipid transporter activity could not be confirmed in vitro.</text>
</comment>
<comment type="pathway">
    <text evidence="1">Protein modification; protein glycosylation.</text>
</comment>
<comment type="subcellular location">
    <subcellularLocation>
        <location evidence="1">Endoplasmic reticulum membrane</location>
        <topology evidence="2">Multi-pass membrane protein</topology>
    </subcellularLocation>
</comment>
<comment type="similarity">
    <text evidence="3">Belongs to the RFT1 family.</text>
</comment>
<keyword id="KW-0256">Endoplasmic reticulum</keyword>
<keyword id="KW-0472">Membrane</keyword>
<keyword id="KW-1185">Reference proteome</keyword>
<keyword id="KW-0762">Sugar transport</keyword>
<keyword id="KW-0812">Transmembrane</keyword>
<keyword id="KW-1133">Transmembrane helix</keyword>
<keyword id="KW-0813">Transport</keyword>
<reference key="1">
    <citation type="journal article" date="2002" name="Nature">
        <title>The genome sequence of Schizosaccharomyces pombe.</title>
        <authorList>
            <person name="Wood V."/>
            <person name="Gwilliam R."/>
            <person name="Rajandream M.A."/>
            <person name="Lyne M.H."/>
            <person name="Lyne R."/>
            <person name="Stewart A."/>
            <person name="Sgouros J.G."/>
            <person name="Peat N."/>
            <person name="Hayles J."/>
            <person name="Baker S.G."/>
            <person name="Basham D."/>
            <person name="Bowman S."/>
            <person name="Brooks K."/>
            <person name="Brown D."/>
            <person name="Brown S."/>
            <person name="Chillingworth T."/>
            <person name="Churcher C.M."/>
            <person name="Collins M."/>
            <person name="Connor R."/>
            <person name="Cronin A."/>
            <person name="Davis P."/>
            <person name="Feltwell T."/>
            <person name="Fraser A."/>
            <person name="Gentles S."/>
            <person name="Goble A."/>
            <person name="Hamlin N."/>
            <person name="Harris D.E."/>
            <person name="Hidalgo J."/>
            <person name="Hodgson G."/>
            <person name="Holroyd S."/>
            <person name="Hornsby T."/>
            <person name="Howarth S."/>
            <person name="Huckle E.J."/>
            <person name="Hunt S."/>
            <person name="Jagels K."/>
            <person name="James K.D."/>
            <person name="Jones L."/>
            <person name="Jones M."/>
            <person name="Leather S."/>
            <person name="McDonald S."/>
            <person name="McLean J."/>
            <person name="Mooney P."/>
            <person name="Moule S."/>
            <person name="Mungall K.L."/>
            <person name="Murphy L.D."/>
            <person name="Niblett D."/>
            <person name="Odell C."/>
            <person name="Oliver K."/>
            <person name="O'Neil S."/>
            <person name="Pearson D."/>
            <person name="Quail M.A."/>
            <person name="Rabbinowitsch E."/>
            <person name="Rutherford K.M."/>
            <person name="Rutter S."/>
            <person name="Saunders D."/>
            <person name="Seeger K."/>
            <person name="Sharp S."/>
            <person name="Skelton J."/>
            <person name="Simmonds M.N."/>
            <person name="Squares R."/>
            <person name="Squares S."/>
            <person name="Stevens K."/>
            <person name="Taylor K."/>
            <person name="Taylor R.G."/>
            <person name="Tivey A."/>
            <person name="Walsh S.V."/>
            <person name="Warren T."/>
            <person name="Whitehead S."/>
            <person name="Woodward J.R."/>
            <person name="Volckaert G."/>
            <person name="Aert R."/>
            <person name="Robben J."/>
            <person name="Grymonprez B."/>
            <person name="Weltjens I."/>
            <person name="Vanstreels E."/>
            <person name="Rieger M."/>
            <person name="Schaefer M."/>
            <person name="Mueller-Auer S."/>
            <person name="Gabel C."/>
            <person name="Fuchs M."/>
            <person name="Duesterhoeft A."/>
            <person name="Fritzc C."/>
            <person name="Holzer E."/>
            <person name="Moestl D."/>
            <person name="Hilbert H."/>
            <person name="Borzym K."/>
            <person name="Langer I."/>
            <person name="Beck A."/>
            <person name="Lehrach H."/>
            <person name="Reinhardt R."/>
            <person name="Pohl T.M."/>
            <person name="Eger P."/>
            <person name="Zimmermann W."/>
            <person name="Wedler H."/>
            <person name="Wambutt R."/>
            <person name="Purnelle B."/>
            <person name="Goffeau A."/>
            <person name="Cadieu E."/>
            <person name="Dreano S."/>
            <person name="Gloux S."/>
            <person name="Lelaure V."/>
            <person name="Mottier S."/>
            <person name="Galibert F."/>
            <person name="Aves S.J."/>
            <person name="Xiang Z."/>
            <person name="Hunt C."/>
            <person name="Moore K."/>
            <person name="Hurst S.M."/>
            <person name="Lucas M."/>
            <person name="Rochet M."/>
            <person name="Gaillardin C."/>
            <person name="Tallada V.A."/>
            <person name="Garzon A."/>
            <person name="Thode G."/>
            <person name="Daga R.R."/>
            <person name="Cruzado L."/>
            <person name="Jimenez J."/>
            <person name="Sanchez M."/>
            <person name="del Rey F."/>
            <person name="Benito J."/>
            <person name="Dominguez A."/>
            <person name="Revuelta J.L."/>
            <person name="Moreno S."/>
            <person name="Armstrong J."/>
            <person name="Forsburg S.L."/>
            <person name="Cerutti L."/>
            <person name="Lowe T."/>
            <person name="McCombie W.R."/>
            <person name="Paulsen I."/>
            <person name="Potashkin J."/>
            <person name="Shpakovski G.V."/>
            <person name="Ussery D."/>
            <person name="Barrell B.G."/>
            <person name="Nurse P."/>
        </authorList>
    </citation>
    <scope>NUCLEOTIDE SEQUENCE [LARGE SCALE GENOMIC DNA]</scope>
    <source>
        <strain>972 / ATCC 24843</strain>
    </source>
</reference>
<name>RFT1_SCHPO</name>